<organism>
    <name type="scientific">Aspergillus oryzae</name>
    <name type="common">Yellow koji mold</name>
    <dbReference type="NCBI Taxonomy" id="5062"/>
    <lineage>
        <taxon>Eukaryota</taxon>
        <taxon>Fungi</taxon>
        <taxon>Dikarya</taxon>
        <taxon>Ascomycota</taxon>
        <taxon>Pezizomycotina</taxon>
        <taxon>Eurotiomycetes</taxon>
        <taxon>Eurotiomycetidae</taxon>
        <taxon>Eurotiales</taxon>
        <taxon>Aspergillaceae</taxon>
        <taxon>Aspergillus</taxon>
        <taxon>Aspergillus subgen. Circumdati</taxon>
    </lineage>
</organism>
<name>PEPA_ASPOZ</name>
<sequence length="390" mass="40551">MVNTSLLAALTAYAVAVSAAPTAPQVKGFSVNQVAVPKGVYRHPAAQLAKAYGKYHATVPTQVAAAAAATGSVTTNPTSNDEEYITQVTVGDDTLGLDFDTGSADLWVFSSQTPSSERSGHDYYTPGSSAQKIDGATWSISYGDGSSASGDVYKDKVTVGGVSYDSQAVESAEKVSSEFTQDTANDGLLGLAFSSINTVQPTPQKTFFDNVKSSLSEPIFAVALKHNAPGVYDFGYTDSSKYTGSITYTDVDNSQGFWGFTADGYSIGSDSSSDSITGIADTGTTLLLLDDSIVDAYYEQVNGASYDSSQGGYVFPSSASLPDFSVTIGDYTATVPGEYISFADVGNGQTFGGIQSNSGIGFSIFGDVFLKSQYVVFDASGPRLGFAAQA</sequence>
<gene>
    <name type="primary">pepA</name>
</gene>
<feature type="signal peptide" evidence="2">
    <location>
        <begin position="1"/>
        <end position="19"/>
    </location>
</feature>
<feature type="propeptide" id="PRO_0000438798" description="Activation peptide" evidence="5">
    <location>
        <begin position="20"/>
        <end position="67"/>
    </location>
</feature>
<feature type="chain" id="PRO_0000438799" description="Aspergillopepsin-1">
    <location>
        <begin position="68"/>
        <end position="390"/>
    </location>
</feature>
<feature type="domain" description="Peptidase A1" evidence="3">
    <location>
        <begin position="84"/>
        <end position="387"/>
    </location>
</feature>
<feature type="active site" evidence="3 9">
    <location>
        <position position="100"/>
    </location>
</feature>
<feature type="active site" evidence="3 9">
    <location>
        <position position="281"/>
    </location>
</feature>
<feature type="glycosylation site" description="O-linked (Man...) threonine" evidence="4">
    <location>
        <position position="70"/>
    </location>
</feature>
<feature type="strand" evidence="10">
    <location>
        <begin position="71"/>
        <end position="77"/>
    </location>
</feature>
<feature type="helix" evidence="10">
    <location>
        <begin position="79"/>
        <end position="81"/>
    </location>
</feature>
<feature type="strand" evidence="10">
    <location>
        <begin position="84"/>
        <end position="90"/>
    </location>
</feature>
<feature type="strand" evidence="10">
    <location>
        <begin position="93"/>
        <end position="100"/>
    </location>
</feature>
<feature type="strand" evidence="10">
    <location>
        <begin position="106"/>
        <end position="108"/>
    </location>
</feature>
<feature type="helix" evidence="10">
    <location>
        <begin position="115"/>
        <end position="118"/>
    </location>
</feature>
<feature type="strand" evidence="10">
    <location>
        <begin position="131"/>
        <end position="141"/>
    </location>
</feature>
<feature type="strand" evidence="10">
    <location>
        <begin position="147"/>
        <end position="159"/>
    </location>
</feature>
<feature type="strand" evidence="10">
    <location>
        <begin position="162"/>
        <end position="175"/>
    </location>
</feature>
<feature type="helix" evidence="10">
    <location>
        <begin position="177"/>
        <end position="181"/>
    </location>
</feature>
<feature type="strand" evidence="10">
    <location>
        <begin position="187"/>
        <end position="190"/>
    </location>
</feature>
<feature type="helix" evidence="10">
    <location>
        <begin position="194"/>
        <end position="196"/>
    </location>
</feature>
<feature type="strand" evidence="10">
    <location>
        <begin position="200"/>
        <end position="202"/>
    </location>
</feature>
<feature type="helix" evidence="10">
    <location>
        <begin position="207"/>
        <end position="211"/>
    </location>
</feature>
<feature type="helix" evidence="10">
    <location>
        <begin position="212"/>
        <end position="214"/>
    </location>
</feature>
<feature type="strand" evidence="10">
    <location>
        <begin position="215"/>
        <end position="223"/>
    </location>
</feature>
<feature type="strand" evidence="10">
    <location>
        <begin position="230"/>
        <end position="236"/>
    </location>
</feature>
<feature type="strand" evidence="10">
    <location>
        <begin position="241"/>
        <end position="250"/>
    </location>
</feature>
<feature type="strand" evidence="10">
    <location>
        <begin position="259"/>
        <end position="267"/>
    </location>
</feature>
<feature type="strand" evidence="10">
    <location>
        <begin position="270"/>
        <end position="272"/>
    </location>
</feature>
<feature type="strand" evidence="10">
    <location>
        <begin position="276"/>
        <end position="280"/>
    </location>
</feature>
<feature type="strand" evidence="10">
    <location>
        <begin position="286"/>
        <end position="289"/>
    </location>
</feature>
<feature type="helix" evidence="10">
    <location>
        <begin position="291"/>
        <end position="298"/>
    </location>
</feature>
<feature type="strand" evidence="10">
    <location>
        <begin position="305"/>
        <end position="307"/>
    </location>
</feature>
<feature type="turn" evidence="10">
    <location>
        <begin position="308"/>
        <end position="311"/>
    </location>
</feature>
<feature type="strand" evidence="10">
    <location>
        <begin position="312"/>
        <end position="316"/>
    </location>
</feature>
<feature type="strand" evidence="10">
    <location>
        <begin position="324"/>
        <end position="328"/>
    </location>
</feature>
<feature type="strand" evidence="10">
    <location>
        <begin position="331"/>
        <end position="335"/>
    </location>
</feature>
<feature type="helix" evidence="10">
    <location>
        <begin position="337"/>
        <end position="340"/>
    </location>
</feature>
<feature type="strand" evidence="10">
    <location>
        <begin position="341"/>
        <end position="344"/>
    </location>
</feature>
<feature type="strand" evidence="10">
    <location>
        <begin position="349"/>
        <end position="356"/>
    </location>
</feature>
<feature type="turn" evidence="10">
    <location>
        <begin position="358"/>
        <end position="360"/>
    </location>
</feature>
<feature type="strand" evidence="10">
    <location>
        <begin position="361"/>
        <end position="365"/>
    </location>
</feature>
<feature type="helix" evidence="10">
    <location>
        <begin position="367"/>
        <end position="370"/>
    </location>
</feature>
<feature type="strand" evidence="10">
    <location>
        <begin position="373"/>
        <end position="378"/>
    </location>
</feature>
<feature type="turn" evidence="10">
    <location>
        <begin position="379"/>
        <end position="382"/>
    </location>
</feature>
<feature type="strand" evidence="10">
    <location>
        <begin position="383"/>
        <end position="389"/>
    </location>
</feature>
<accession>P0CU33</accession>
<proteinExistence type="evidence at protein level"/>
<reference key="1">
    <citation type="journal article" date="1995" name="Adv. Exp. Med. Biol.">
        <title>Molecular cloning and sequence analysis of a gene encoding an aspartic proteinase from Aspergillus oryzae.</title>
        <authorList>
            <person name="Takeuchi M."/>
            <person name="Ogura K."/>
            <person name="Hamamoto T."/>
            <person name="Kobayashi Y."/>
        </authorList>
    </citation>
    <scope>NUCLEOTIDE SEQUENCE [GENOMIC DNA / MRNA]</scope>
    <scope>PROTEIN SEQUENCE OF N-TERMINUS</scope>
    <scope>SUBCELLULAR LOCATION</scope>
    <source>
        <strain>M-9</strain>
    </source>
</reference>
<reference key="2">
    <citation type="journal article" date="2003" name="J. Mol. Biol.">
        <title>Crystal structures of Aspergillus oryzae aspartic proteinase and its complex with an inhibitor pepstatin at 1.9A resolution.</title>
        <authorList>
            <person name="Kamitori S."/>
            <person name="Ohtaki A."/>
            <person name="Ino H."/>
            <person name="Takeuchi M."/>
        </authorList>
    </citation>
    <scope>X-RAY CRYSTALLOGRAPHY (1.90 ANGSTROMS) OF 68-390 IN COMPLEX WITH INHIBITOR</scope>
    <scope>GLYCOSYLATION AT THR-70</scope>
    <source>
        <strain>M-9</strain>
    </source>
</reference>
<dbReference type="EC" id="3.4.23.18" evidence="1"/>
<dbReference type="PDB" id="1IZD">
    <property type="method" value="X-ray"/>
    <property type="resolution" value="1.90 A"/>
    <property type="chains" value="A=68-390"/>
</dbReference>
<dbReference type="PDB" id="1IZE">
    <property type="method" value="X-ray"/>
    <property type="resolution" value="1.90 A"/>
    <property type="chains" value="A=68-390"/>
</dbReference>
<dbReference type="PDBsum" id="1IZD"/>
<dbReference type="PDBsum" id="1IZE"/>
<dbReference type="SMR" id="P0CU33"/>
<dbReference type="GlyCosmos" id="P0CU33">
    <property type="glycosylation" value="1 site, No reported glycans"/>
</dbReference>
<dbReference type="iPTMnet" id="P0CU33"/>
<dbReference type="VEuPathDB" id="FungiDB:AO090120000474"/>
<dbReference type="EvolutionaryTrace" id="P0CU33"/>
<dbReference type="GO" id="GO:0005576">
    <property type="term" value="C:extracellular region"/>
    <property type="evidence" value="ECO:0007669"/>
    <property type="project" value="UniProtKB-SubCell"/>
</dbReference>
<dbReference type="GO" id="GO:0004190">
    <property type="term" value="F:aspartic-type endopeptidase activity"/>
    <property type="evidence" value="ECO:0007669"/>
    <property type="project" value="UniProtKB-KW"/>
</dbReference>
<dbReference type="GO" id="GO:0006508">
    <property type="term" value="P:proteolysis"/>
    <property type="evidence" value="ECO:0007669"/>
    <property type="project" value="UniProtKB-KW"/>
</dbReference>
<dbReference type="CDD" id="cd06097">
    <property type="entry name" value="Aspergillopepsin_like"/>
    <property type="match status" value="1"/>
</dbReference>
<dbReference type="FunFam" id="2.40.70.10:FF:000024">
    <property type="entry name" value="Endothiapepsin"/>
    <property type="match status" value="1"/>
</dbReference>
<dbReference type="FunFam" id="2.40.70.10:FF:000026">
    <property type="entry name" value="Endothiapepsin"/>
    <property type="match status" value="1"/>
</dbReference>
<dbReference type="Gene3D" id="2.40.70.10">
    <property type="entry name" value="Acid Proteases"/>
    <property type="match status" value="2"/>
</dbReference>
<dbReference type="InterPro" id="IPR001461">
    <property type="entry name" value="Aspartic_peptidase_A1"/>
</dbReference>
<dbReference type="InterPro" id="IPR001969">
    <property type="entry name" value="Aspartic_peptidase_AS"/>
</dbReference>
<dbReference type="InterPro" id="IPR034163">
    <property type="entry name" value="Aspergillopepsin-like_cat_dom"/>
</dbReference>
<dbReference type="InterPro" id="IPR033121">
    <property type="entry name" value="PEPTIDASE_A1"/>
</dbReference>
<dbReference type="InterPro" id="IPR021109">
    <property type="entry name" value="Peptidase_aspartic_dom_sf"/>
</dbReference>
<dbReference type="PANTHER" id="PTHR47966:SF2">
    <property type="entry name" value="ASPERGILLOPEPSIN-1-RELATED"/>
    <property type="match status" value="1"/>
</dbReference>
<dbReference type="PANTHER" id="PTHR47966">
    <property type="entry name" value="BETA-SITE APP-CLEAVING ENZYME, ISOFORM A-RELATED"/>
    <property type="match status" value="1"/>
</dbReference>
<dbReference type="Pfam" id="PF00026">
    <property type="entry name" value="Asp"/>
    <property type="match status" value="1"/>
</dbReference>
<dbReference type="PRINTS" id="PR00792">
    <property type="entry name" value="PEPSIN"/>
</dbReference>
<dbReference type="SUPFAM" id="SSF50630">
    <property type="entry name" value="Acid proteases"/>
    <property type="match status" value="1"/>
</dbReference>
<dbReference type="PROSITE" id="PS00141">
    <property type="entry name" value="ASP_PROTEASE"/>
    <property type="match status" value="2"/>
</dbReference>
<dbReference type="PROSITE" id="PS51767">
    <property type="entry name" value="PEPTIDASE_A1"/>
    <property type="match status" value="1"/>
</dbReference>
<protein>
    <recommendedName>
        <fullName evidence="8">Aspergillopepsin-1</fullName>
        <ecNumber evidence="1">3.4.23.18</ecNumber>
    </recommendedName>
    <alternativeName>
        <fullName evidence="7">Aspartic protease 2</fullName>
        <shortName evidence="6">AOAP</shortName>
    </alternativeName>
    <alternativeName>
        <fullName>Aspergillopepsin I</fullName>
    </alternativeName>
    <alternativeName>
        <fullName>Aspergillopeptidase A</fullName>
    </alternativeName>
</protein>
<keyword id="KW-0002">3D-structure</keyword>
<keyword id="KW-0064">Aspartyl protease</keyword>
<keyword id="KW-0903">Direct protein sequencing</keyword>
<keyword id="KW-0325">Glycoprotein</keyword>
<keyword id="KW-0378">Hydrolase</keyword>
<keyword id="KW-0645">Protease</keyword>
<keyword id="KW-0964">Secreted</keyword>
<keyword id="KW-0732">Signal</keyword>
<comment type="function">
    <text evidence="1">Secreted aspartic endopeptidase that allows assimilation of proteinaceous substrates. The scissile peptide bond is attacked by a nucleophilic water molecule activated by two aspartic residues in the active site. Shows a broad primary substrate specificity. Favors hydrophobic residues at the P1 and P1' positions, but also accepts a lysine residue in the P1 position, leading to the activation of trypsinogen and chymotrypsinogen A.</text>
</comment>
<comment type="catalytic activity">
    <reaction evidence="1">
        <text>Hydrolysis of proteins with broad specificity. Generally favors hydrophobic residues in P1 and P1', but also accepts Lys in P1, which leads to activation of trypsinogen. Does not clot milk.</text>
        <dbReference type="EC" id="3.4.23.18"/>
    </reaction>
</comment>
<comment type="activity regulation">
    <text evidence="9">Inhibited by the microbial peptide pepstatin.</text>
</comment>
<comment type="subcellular location">
    <subcellularLocation>
        <location evidence="5">Secreted</location>
    </subcellularLocation>
</comment>
<comment type="similarity">
    <text evidence="3">Belongs to the peptidase A1 family.</text>
</comment>
<comment type="caution">
    <text evidence="8">The enzyme was purified from Aspergillus oryzae var. globosus M-9. The sequence does however not resemble any currently known A.oryzae aspartic protease and is most similar to an Aspergillus pseudoglaucus (E.repens) enzyme.</text>
</comment>
<evidence type="ECO:0000250" key="1">
    <source>
        <dbReference type="UniProtKB" id="Q12567"/>
    </source>
</evidence>
<evidence type="ECO:0000255" key="2"/>
<evidence type="ECO:0000255" key="3">
    <source>
        <dbReference type="PROSITE-ProRule" id="PRU01103"/>
    </source>
</evidence>
<evidence type="ECO:0000269" key="4">
    <source>
    </source>
</evidence>
<evidence type="ECO:0000269" key="5">
    <source>
    </source>
</evidence>
<evidence type="ECO:0000303" key="6">
    <source>
    </source>
</evidence>
<evidence type="ECO:0000303" key="7">
    <source>
    </source>
</evidence>
<evidence type="ECO:0000305" key="8"/>
<evidence type="ECO:0000305" key="9">
    <source>
    </source>
</evidence>
<evidence type="ECO:0007829" key="10">
    <source>
        <dbReference type="PDB" id="1IZD"/>
    </source>
</evidence>